<proteinExistence type="evidence at protein level"/>
<reference key="1">
    <citation type="journal article" date="1990" name="J. Biol. Chem.">
        <title>Cloning, structure, and expression of the gene for a novel regulatory subunit of cAMP-dependent protein kinase in Caenorhabditis elegans.</title>
        <authorList>
            <person name="Lu X."/>
            <person name="Gross R.E."/>
            <person name="Bagchi S."/>
            <person name="Rubin C.S."/>
        </authorList>
    </citation>
    <scope>NUCLEOTIDE SEQUENCE [MRNA] (ISOFORM A)</scope>
    <scope>FUNCTION</scope>
    <scope>SUBCELLULAR LOCATION</scope>
    <scope>DEVELOPMENTAL STAGE</scope>
    <source>
        <strain>Bristol N2</strain>
    </source>
</reference>
<reference key="2">
    <citation type="journal article" date="1998" name="Science">
        <title>Genome sequence of the nematode C. elegans: a platform for investigating biology.</title>
        <authorList>
            <consortium name="The C. elegans sequencing consortium"/>
        </authorList>
    </citation>
    <scope>NUCLEOTIDE SEQUENCE [LARGE SCALE GENOMIC DNA]</scope>
    <scope>ALTERNATIVE SPLICING</scope>
    <source>
        <strain>Bristol N2</strain>
    </source>
</reference>
<reference key="3">
    <citation type="journal article" date="2013" name="PLoS Genet.">
        <title>PKA controls calcium influx into motor neurons during a rhythmic behavior.</title>
        <authorList>
            <person name="Wang H."/>
            <person name="Sieburth D."/>
        </authorList>
    </citation>
    <scope>FUNCTION</scope>
    <scope>MUTAGENESIS OF GLY-310</scope>
</reference>
<comment type="function">
    <text evidence="4">Controls the rhythmic contraction of enteric muscles probably by regulating G-protein coupled receptor aex-2-mediated calcium influx in GABAergic DVB neurons.</text>
</comment>
<comment type="subunit">
    <text>Tetramer, composed of 2 regulatory (R) and 2 catalytic (C) subunits. In the presence of cAMP it dissociates into 2 active monomeric C subunits and an R dimer that binds four cAMP molecules.</text>
</comment>
<comment type="subcellular location">
    <subcellularLocation>
        <location evidence="3">Cytoplasm</location>
        <location evidence="3">Cytosol</location>
    </subcellularLocation>
</comment>
<comment type="alternative products">
    <event type="alternative splicing"/>
    <isoform>
        <id>P30625-1</id>
        <name evidence="6">a</name>
        <sequence type="displayed"/>
    </isoform>
    <isoform>
        <id>P30625-2</id>
        <name evidence="7">b</name>
        <sequence type="described" ref="VSP_015952"/>
    </isoform>
    <isoform>
        <id>P30625-3</id>
        <name evidence="8">c</name>
        <sequence type="described" ref="VSP_057512"/>
    </isoform>
</comment>
<comment type="developmental stage">
    <text evidence="3">Expressed at a low level during embryogenesis. Expression increases sharply approximately four hours before hatching with levels peaking during the first larval stage. Levels then decrease as development progresses to adulthood.</text>
</comment>
<comment type="PTM">
    <text>The pseudophosphorylation site binds to the substrate-binding region of the catalytic chain but is not phosphorylated. The physiological significance of phosphorylations by other kinases is unclear.</text>
</comment>
<comment type="similarity">
    <text evidence="5">Belongs to the cAMP-dependent kinase regulatory chain family.</text>
</comment>
<comment type="sequence caution" evidence="5">
    <conflict type="erroneous initiation">
        <sequence resource="EMBL-CDS" id="AAA27980"/>
    </conflict>
</comment>
<evidence type="ECO:0000250" key="1"/>
<evidence type="ECO:0000256" key="2">
    <source>
        <dbReference type="SAM" id="MobiDB-lite"/>
    </source>
</evidence>
<evidence type="ECO:0000269" key="3">
    <source>
    </source>
</evidence>
<evidence type="ECO:0000269" key="4">
    <source>
    </source>
</evidence>
<evidence type="ECO:0000305" key="5"/>
<evidence type="ECO:0000312" key="6">
    <source>
        <dbReference type="WormBase" id="R07E4.6a"/>
    </source>
</evidence>
<evidence type="ECO:0000312" key="7">
    <source>
        <dbReference type="WormBase" id="R07E4.6b"/>
    </source>
</evidence>
<evidence type="ECO:0000312" key="8">
    <source>
        <dbReference type="WormBase" id="R07E4.6c"/>
    </source>
</evidence>
<keyword id="KW-0025">Alternative splicing</keyword>
<keyword id="KW-0114">cAMP</keyword>
<keyword id="KW-0116">cAMP-binding</keyword>
<keyword id="KW-0963">Cytoplasm</keyword>
<keyword id="KW-1015">Disulfide bond</keyword>
<keyword id="KW-0547">Nucleotide-binding</keyword>
<keyword id="KW-0597">Phosphoprotein</keyword>
<keyword id="KW-1185">Reference proteome</keyword>
<keyword id="KW-0677">Repeat</keyword>
<organism>
    <name type="scientific">Caenorhabditis elegans</name>
    <dbReference type="NCBI Taxonomy" id="6239"/>
    <lineage>
        <taxon>Eukaryota</taxon>
        <taxon>Metazoa</taxon>
        <taxon>Ecdysozoa</taxon>
        <taxon>Nematoda</taxon>
        <taxon>Chromadorea</taxon>
        <taxon>Rhabditida</taxon>
        <taxon>Rhabditina</taxon>
        <taxon>Rhabditomorpha</taxon>
        <taxon>Rhabditoidea</taxon>
        <taxon>Rhabditidae</taxon>
        <taxon>Peloderinae</taxon>
        <taxon>Caenorhabditis</taxon>
    </lineage>
</organism>
<protein>
    <recommendedName>
        <fullName>cAMP-dependent protein kinase regulatory subunit</fullName>
    </recommendedName>
</protein>
<gene>
    <name type="primary">kin-2</name>
    <name type="synonym">kin-a</name>
    <name type="ORF">R07E4.6</name>
</gene>
<sequence length="366" mass="41468">MSGGNEEDQLAQCQAYVQRHNIQQLVKEAIVVLCIHKPDNPVLFLKDHFEKLNEQRAQEGGNPDAADDDDIIVEPPKRSGGRRTGISAEPIKEDDTEYKKVVIPKDDATRRSLESAMRKNLLFAHLEEDEQKTMYDAMFPVEKSAGETIIEQGEEGDNFYVIDKGTVDVYVNHEYVLTINEGGSFGELALIYGTPRAATVIAKTDVKLWAIDRLTYRRILMGSVTKKRKMYDEFLSKVQILADLDQWERANVADALERCDFEPGTHVVEQGQPGDEFFIILEGEANVLQKRSDDAPFDVVGHLGMSDYFGEIALLLDRPRAATVVAKTHLKCIKLDRNRFERVMGPVREILKRDVSNYNSYVKLMT</sequence>
<name>KAPR_CAEEL</name>
<feature type="chain" id="PRO_0000205394" description="cAMP-dependent protein kinase regulatory subunit">
    <location>
        <begin position="1"/>
        <end position="366"/>
    </location>
</feature>
<feature type="region of interest" description="Dimerization and phosphorylation">
    <location>
        <begin position="1"/>
        <end position="121"/>
    </location>
</feature>
<feature type="region of interest" description="Disordered" evidence="2">
    <location>
        <begin position="55"/>
        <end position="87"/>
    </location>
</feature>
<feature type="short sequence motif" description="Pseudophosphorylation motif">
    <location>
        <begin position="82"/>
        <end position="86"/>
    </location>
</feature>
<feature type="binding site">
    <location>
        <begin position="122"/>
        <end position="239"/>
    </location>
    <ligand>
        <name>3',5'-cyclic AMP</name>
        <dbReference type="ChEBI" id="CHEBI:58165"/>
        <label>1</label>
    </ligand>
</feature>
<feature type="binding site">
    <location>
        <position position="187"/>
    </location>
    <ligand>
        <name>3',5'-cyclic AMP</name>
        <dbReference type="ChEBI" id="CHEBI:58165"/>
        <label>1</label>
    </ligand>
</feature>
<feature type="binding site">
    <location>
        <position position="196"/>
    </location>
    <ligand>
        <name>3',5'-cyclic AMP</name>
        <dbReference type="ChEBI" id="CHEBI:58165"/>
        <label>1</label>
    </ligand>
</feature>
<feature type="binding site">
    <location>
        <begin position="240"/>
        <end position="366"/>
    </location>
    <ligand>
        <name>3',5'-cyclic AMP</name>
        <dbReference type="ChEBI" id="CHEBI:58165"/>
        <label>2</label>
    </ligand>
</feature>
<feature type="binding site">
    <location>
        <position position="311"/>
    </location>
    <ligand>
        <name>3',5'-cyclic AMP</name>
        <dbReference type="ChEBI" id="CHEBI:58165"/>
        <label>2</label>
    </ligand>
</feature>
<feature type="binding site">
    <location>
        <position position="320"/>
    </location>
    <ligand>
        <name>3',5'-cyclic AMP</name>
        <dbReference type="ChEBI" id="CHEBI:58165"/>
        <label>2</label>
    </ligand>
</feature>
<feature type="modified residue" description="Phosphoserine" evidence="1">
    <location>
        <position position="87"/>
    </location>
</feature>
<feature type="disulfide bond" description="Interchain (with C-34)" evidence="1">
    <location>
        <position position="13"/>
    </location>
</feature>
<feature type="disulfide bond" description="Interchain (with C-13)" evidence="1">
    <location>
        <position position="34"/>
    </location>
</feature>
<feature type="splice variant" id="VSP_015952" description="In isoform b." evidence="5">
    <original>MSGGNEEDQLAQCQAYVQRHNIQQLVKEAIVVLCIHKPDNPVLFLKDHFEKLNEQRAQ</original>
    <variation>MGQQLSNRRNSQSVGATKNAKTPKPK</variation>
    <location>
        <begin position="1"/>
        <end position="58"/>
    </location>
</feature>
<feature type="splice variant" id="VSP_057512" description="In isoform c." evidence="5">
    <original>M</original>
    <variation>MNNYSGDIVFM</variation>
    <location>
        <position position="1"/>
    </location>
</feature>
<feature type="mutagenesis site" description="Loss of cAMP binding which may prevent dissociation from kin-1. Contraction of enteric muscles is partially impaired." evidence="4">
    <original>G</original>
    <variation>D</variation>
    <location>
        <position position="310"/>
    </location>
</feature>
<feature type="sequence conflict" description="In Ref. 1; AAA27980." evidence="5" ref="1">
    <original>T</original>
    <variation>I</variation>
    <location>
        <position position="204"/>
    </location>
</feature>
<feature type="sequence conflict" description="In Ref. 1; AAA27980." evidence="5" ref="1">
    <original>A</original>
    <variation>V</variation>
    <location>
        <position position="250"/>
    </location>
</feature>
<accession>P30625</accession>
<accession>Q0MQ68</accession>
<accession>Q21820</accession>
<accession>Q95ZR1</accession>
<dbReference type="EMBL" id="J05220">
    <property type="protein sequence ID" value="AAA27980.1"/>
    <property type="status" value="ALT_INIT"/>
    <property type="molecule type" value="mRNA"/>
</dbReference>
<dbReference type="EMBL" id="FO080885">
    <property type="protein sequence ID" value="CCD67512.1"/>
    <property type="molecule type" value="Genomic_DNA"/>
</dbReference>
<dbReference type="EMBL" id="FO080885">
    <property type="protein sequence ID" value="CCD67513.1"/>
    <property type="molecule type" value="Genomic_DNA"/>
</dbReference>
<dbReference type="EMBL" id="FO080885">
    <property type="protein sequence ID" value="CCD67514.1"/>
    <property type="molecule type" value="Genomic_DNA"/>
</dbReference>
<dbReference type="PIR" id="A35076">
    <property type="entry name" value="OKKW1R"/>
</dbReference>
<dbReference type="PIR" id="T16701">
    <property type="entry name" value="T16701"/>
</dbReference>
<dbReference type="RefSeq" id="NP_001024842.1">
    <molecule id="P30625-2"/>
    <property type="nucleotide sequence ID" value="NM_001029671.6"/>
</dbReference>
<dbReference type="RefSeq" id="NP_001076771.1">
    <molecule id="P30625-3"/>
    <property type="nucleotide sequence ID" value="NM_001083302.4"/>
</dbReference>
<dbReference type="RefSeq" id="NP_001379808.1">
    <molecule id="P30625-1"/>
    <property type="nucleotide sequence ID" value="NM_001392782.1"/>
</dbReference>
<dbReference type="RefSeq" id="NP_508999.2">
    <property type="nucleotide sequence ID" value="NM_076598.5"/>
</dbReference>
<dbReference type="SMR" id="P30625"/>
<dbReference type="BioGRID" id="45796">
    <property type="interactions" value="29"/>
</dbReference>
<dbReference type="DIP" id="DIP-26281N"/>
<dbReference type="FunCoup" id="P30625">
    <property type="interactions" value="1593"/>
</dbReference>
<dbReference type="IntAct" id="P30625">
    <property type="interactions" value="9"/>
</dbReference>
<dbReference type="STRING" id="6239.R07E4.6c.1"/>
<dbReference type="PaxDb" id="6239-R07E4.6c"/>
<dbReference type="PeptideAtlas" id="P30625"/>
<dbReference type="EnsemblMetazoa" id="R07E4.6a.1">
    <molecule id="P30625-1"/>
    <property type="protein sequence ID" value="R07E4.6a.1"/>
    <property type="gene ID" value="WBGene00002190"/>
</dbReference>
<dbReference type="EnsemblMetazoa" id="R07E4.6b.1">
    <molecule id="P30625-2"/>
    <property type="protein sequence ID" value="R07E4.6b.1"/>
    <property type="gene ID" value="WBGene00002190"/>
</dbReference>
<dbReference type="EnsemblMetazoa" id="R07E4.6c.1">
    <molecule id="P30625-3"/>
    <property type="protein sequence ID" value="R07E4.6c.1"/>
    <property type="gene ID" value="WBGene00002190"/>
</dbReference>
<dbReference type="GeneID" id="180864"/>
<dbReference type="KEGG" id="cel:CELE_R07E4.6"/>
<dbReference type="UCSC" id="R07E4.6a">
    <property type="organism name" value="c. elegans"/>
</dbReference>
<dbReference type="AGR" id="WB:WBGene00002190"/>
<dbReference type="CTD" id="180864"/>
<dbReference type="WormBase" id="R07E4.6a">
    <molecule id="P30625-1"/>
    <property type="protein sequence ID" value="CE39609"/>
    <property type="gene ID" value="WBGene00002190"/>
    <property type="gene designation" value="kin-2"/>
</dbReference>
<dbReference type="WormBase" id="R07E4.6b">
    <molecule id="P30625-2"/>
    <property type="protein sequence ID" value="CE28749"/>
    <property type="gene ID" value="WBGene00002190"/>
    <property type="gene designation" value="kin-2"/>
</dbReference>
<dbReference type="WormBase" id="R07E4.6c">
    <molecule id="P30625-3"/>
    <property type="protein sequence ID" value="CE04821"/>
    <property type="gene ID" value="WBGene00002190"/>
    <property type="gene designation" value="kin-2"/>
</dbReference>
<dbReference type="eggNOG" id="KOG1113">
    <property type="taxonomic scope" value="Eukaryota"/>
</dbReference>
<dbReference type="GeneTree" id="ENSGT00940000157513"/>
<dbReference type="HOGENOM" id="CLU_018310_1_0_1"/>
<dbReference type="InParanoid" id="P30625"/>
<dbReference type="OMA" id="DQWERAN"/>
<dbReference type="OrthoDB" id="417078at2759"/>
<dbReference type="Reactome" id="R-CEL-163615">
    <property type="pathway name" value="PKA activation"/>
</dbReference>
<dbReference type="Reactome" id="R-CEL-164378">
    <property type="pathway name" value="PKA activation in glucagon signalling"/>
</dbReference>
<dbReference type="Reactome" id="R-CEL-180024">
    <property type="pathway name" value="DARPP-32 events"/>
</dbReference>
<dbReference type="Reactome" id="R-CEL-432040">
    <property type="pathway name" value="Vasopressin regulates renal water homeostasis via Aquaporins"/>
</dbReference>
<dbReference type="Reactome" id="R-CEL-442720">
    <property type="pathway name" value="CREB1 phosphorylation through the activation of Adenylate Cyclase"/>
</dbReference>
<dbReference type="Reactome" id="R-CEL-5610787">
    <property type="pathway name" value="Hedgehog 'off' state"/>
</dbReference>
<dbReference type="Reactome" id="R-CEL-9634597">
    <property type="pathway name" value="GPER1 signaling"/>
</dbReference>
<dbReference type="Reactome" id="R-CEL-983231">
    <property type="pathway name" value="Factors involved in megakaryocyte development and platelet production"/>
</dbReference>
<dbReference type="Reactome" id="R-CEL-9856530">
    <property type="pathway name" value="High laminar flow shear stress activates signaling by PIEZO1 and PECAM1:CDH5:KDR in endothelial cells"/>
</dbReference>
<dbReference type="PRO" id="PR:P30625"/>
<dbReference type="Proteomes" id="UP000001940">
    <property type="component" value="Chromosome X"/>
</dbReference>
<dbReference type="Bgee" id="WBGene00002190">
    <property type="expression patterns" value="Expressed in pharyngeal muscle cell (C elegans) and 3 other cell types or tissues"/>
</dbReference>
<dbReference type="GO" id="GO:0005952">
    <property type="term" value="C:cAMP-dependent protein kinase complex"/>
    <property type="evidence" value="ECO:0000314"/>
    <property type="project" value="WormBase"/>
</dbReference>
<dbReference type="GO" id="GO:0005829">
    <property type="term" value="C:cytosol"/>
    <property type="evidence" value="ECO:0000314"/>
    <property type="project" value="WormBase"/>
</dbReference>
<dbReference type="GO" id="GO:0016020">
    <property type="term" value="C:membrane"/>
    <property type="evidence" value="ECO:0000314"/>
    <property type="project" value="WormBase"/>
</dbReference>
<dbReference type="GO" id="GO:0030552">
    <property type="term" value="F:cAMP binding"/>
    <property type="evidence" value="ECO:0000318"/>
    <property type="project" value="GO_Central"/>
</dbReference>
<dbReference type="GO" id="GO:0004862">
    <property type="term" value="F:cAMP-dependent protein kinase inhibitor activity"/>
    <property type="evidence" value="ECO:0000318"/>
    <property type="project" value="GO_Central"/>
</dbReference>
<dbReference type="GO" id="GO:0008603">
    <property type="term" value="F:cAMP-dependent protein kinase regulator activity"/>
    <property type="evidence" value="ECO:0000250"/>
    <property type="project" value="WormBase"/>
</dbReference>
<dbReference type="GO" id="GO:0034236">
    <property type="term" value="F:protein kinase A catalytic subunit binding"/>
    <property type="evidence" value="ECO:0000318"/>
    <property type="project" value="GO_Central"/>
</dbReference>
<dbReference type="GO" id="GO:0007189">
    <property type="term" value="P:adenylate cyclase-activating G protein-coupled receptor signaling pathway"/>
    <property type="evidence" value="ECO:0000318"/>
    <property type="project" value="GO_Central"/>
</dbReference>
<dbReference type="GO" id="GO:0072375">
    <property type="term" value="P:medium-term memory"/>
    <property type="evidence" value="ECO:0000315"/>
    <property type="project" value="WormBase"/>
</dbReference>
<dbReference type="GO" id="GO:1900194">
    <property type="term" value="P:negative regulation of oocyte maturation"/>
    <property type="evidence" value="ECO:0000315"/>
    <property type="project" value="WormBase"/>
</dbReference>
<dbReference type="GO" id="GO:0010628">
    <property type="term" value="P:positive regulation of gene expression"/>
    <property type="evidence" value="ECO:0000315"/>
    <property type="project" value="UniProtKB"/>
</dbReference>
<dbReference type="GO" id="GO:2000114">
    <property type="term" value="P:regulation of establishment of cell polarity"/>
    <property type="evidence" value="ECO:0000316"/>
    <property type="project" value="WormBase"/>
</dbReference>
<dbReference type="CDD" id="cd00038">
    <property type="entry name" value="CAP_ED"/>
    <property type="match status" value="2"/>
</dbReference>
<dbReference type="CDD" id="cd12097">
    <property type="entry name" value="DD_RI_PKA"/>
    <property type="match status" value="1"/>
</dbReference>
<dbReference type="FunFam" id="2.60.120.10:FF:000120">
    <property type="entry name" value="cAMP-dependent protein kinase regulatory subunit"/>
    <property type="match status" value="1"/>
</dbReference>
<dbReference type="FunFam" id="2.60.120.10:FF:000006">
    <property type="entry name" value="cAMP-dependent protein kinase type I-alpha regulatory subunit"/>
    <property type="match status" value="1"/>
</dbReference>
<dbReference type="Gene3D" id="1.20.890.10">
    <property type="entry name" value="cAMP-dependent protein kinase regulatory subunit, dimerization-anchoring domain"/>
    <property type="match status" value="1"/>
</dbReference>
<dbReference type="Gene3D" id="2.60.120.10">
    <property type="entry name" value="Jelly Rolls"/>
    <property type="match status" value="2"/>
</dbReference>
<dbReference type="InterPro" id="IPR050503">
    <property type="entry name" value="cAMP-dep_PK_reg_su-like"/>
</dbReference>
<dbReference type="InterPro" id="IPR012198">
    <property type="entry name" value="cAMP_dep_PK_reg_su"/>
</dbReference>
<dbReference type="InterPro" id="IPR003117">
    <property type="entry name" value="cAMP_dep_PK_reg_su_I/II_a/b"/>
</dbReference>
<dbReference type="InterPro" id="IPR018488">
    <property type="entry name" value="cNMP-bd_CS"/>
</dbReference>
<dbReference type="InterPro" id="IPR000595">
    <property type="entry name" value="cNMP-bd_dom"/>
</dbReference>
<dbReference type="InterPro" id="IPR018490">
    <property type="entry name" value="cNMP-bd_dom_sf"/>
</dbReference>
<dbReference type="InterPro" id="IPR014710">
    <property type="entry name" value="RmlC-like_jellyroll"/>
</dbReference>
<dbReference type="PANTHER" id="PTHR11635">
    <property type="entry name" value="CAMP-DEPENDENT PROTEIN KINASE REGULATORY CHAIN"/>
    <property type="match status" value="1"/>
</dbReference>
<dbReference type="PANTHER" id="PTHR11635:SF152">
    <property type="entry name" value="CAMP-DEPENDENT PROTEIN KINASE TYPE I REGULATORY SUBUNIT-RELATED"/>
    <property type="match status" value="1"/>
</dbReference>
<dbReference type="Pfam" id="PF00027">
    <property type="entry name" value="cNMP_binding"/>
    <property type="match status" value="2"/>
</dbReference>
<dbReference type="Pfam" id="PF02197">
    <property type="entry name" value="RIIa"/>
    <property type="match status" value="1"/>
</dbReference>
<dbReference type="PIRSF" id="PIRSF000548">
    <property type="entry name" value="PK_regulatory"/>
    <property type="match status" value="1"/>
</dbReference>
<dbReference type="PRINTS" id="PR00103">
    <property type="entry name" value="CAMPKINASE"/>
</dbReference>
<dbReference type="SMART" id="SM00100">
    <property type="entry name" value="cNMP"/>
    <property type="match status" value="2"/>
</dbReference>
<dbReference type="SMART" id="SM00394">
    <property type="entry name" value="RIIa"/>
    <property type="match status" value="1"/>
</dbReference>
<dbReference type="SUPFAM" id="SSF51206">
    <property type="entry name" value="cAMP-binding domain-like"/>
    <property type="match status" value="2"/>
</dbReference>
<dbReference type="SUPFAM" id="SSF47391">
    <property type="entry name" value="Dimerization-anchoring domain of cAMP-dependent PK regulatory subunit"/>
    <property type="match status" value="1"/>
</dbReference>
<dbReference type="PROSITE" id="PS00888">
    <property type="entry name" value="CNMP_BINDING_1"/>
    <property type="match status" value="2"/>
</dbReference>
<dbReference type="PROSITE" id="PS00889">
    <property type="entry name" value="CNMP_BINDING_2"/>
    <property type="match status" value="2"/>
</dbReference>
<dbReference type="PROSITE" id="PS50042">
    <property type="entry name" value="CNMP_BINDING_3"/>
    <property type="match status" value="2"/>
</dbReference>